<accession>Q5M5T1</accession>
<proteinExistence type="inferred from homology"/>
<keyword id="KW-0963">Cytoplasm</keyword>
<keyword id="KW-0378">Hydrolase</keyword>
<keyword id="KW-0464">Manganese</keyword>
<keyword id="KW-0479">Metal-binding</keyword>
<keyword id="KW-1185">Reference proteome</keyword>
<sequence length="310" mass="33810">MSKIFVFGHQNPDSDAIGSSYGYAYLKRQLGVEAEAVALGTPNEETAFVLDYFSVNAPRVVESAQSEGVNQVILTDHNEFQQSISDIKDVEVIEVVDHHRVANFETANPLMMRLEPVGSASSIVYRMFKENNVEIPKDVAGLLLSGLISDTLLLKSPTTHASDPAVAEELARLAGVNLEEYGLAMLKAGTNLSSKSAEELIDIDAKTFELNGNQVRVAQVNTVDISDVLSRQAEIEEAINSSIKSNGYSDFVLMITDILNSNSEILALGSNTDKIEKAFNFVLENNHAFLKGAVSRKKQVVPQLTESFNV</sequence>
<reference key="1">
    <citation type="journal article" date="2004" name="Nat. Biotechnol.">
        <title>Complete sequence and comparative genome analysis of the dairy bacterium Streptococcus thermophilus.</title>
        <authorList>
            <person name="Bolotin A."/>
            <person name="Quinquis B."/>
            <person name="Renault P."/>
            <person name="Sorokin A."/>
            <person name="Ehrlich S.D."/>
            <person name="Kulakauskas S."/>
            <person name="Lapidus A."/>
            <person name="Goltsman E."/>
            <person name="Mazur M."/>
            <person name="Pusch G.D."/>
            <person name="Fonstein M."/>
            <person name="Overbeek R."/>
            <person name="Kyprides N."/>
            <person name="Purnelle B."/>
            <person name="Prozzi D."/>
            <person name="Ngui K."/>
            <person name="Masuy D."/>
            <person name="Hancy F."/>
            <person name="Burteau S."/>
            <person name="Boutry M."/>
            <person name="Delcour J."/>
            <person name="Goffeau A."/>
            <person name="Hols P."/>
        </authorList>
    </citation>
    <scope>NUCLEOTIDE SEQUENCE [LARGE SCALE GENOMIC DNA]</scope>
    <source>
        <strain>ATCC BAA-250 / LMG 18311</strain>
    </source>
</reference>
<feature type="chain" id="PRO_1000012331" description="Probable manganese-dependent inorganic pyrophosphatase">
    <location>
        <begin position="1"/>
        <end position="310"/>
    </location>
</feature>
<feature type="binding site" evidence="1">
    <location>
        <position position="9"/>
    </location>
    <ligand>
        <name>Mn(2+)</name>
        <dbReference type="ChEBI" id="CHEBI:29035"/>
        <label>1</label>
    </ligand>
</feature>
<feature type="binding site" evidence="1">
    <location>
        <position position="13"/>
    </location>
    <ligand>
        <name>Mn(2+)</name>
        <dbReference type="ChEBI" id="CHEBI:29035"/>
        <label>1</label>
    </ligand>
</feature>
<feature type="binding site" evidence="1">
    <location>
        <position position="15"/>
    </location>
    <ligand>
        <name>Mn(2+)</name>
        <dbReference type="ChEBI" id="CHEBI:29035"/>
        <label>2</label>
    </ligand>
</feature>
<feature type="binding site" evidence="1">
    <location>
        <position position="76"/>
    </location>
    <ligand>
        <name>Mn(2+)</name>
        <dbReference type="ChEBI" id="CHEBI:29035"/>
        <label>1</label>
    </ligand>
</feature>
<feature type="binding site" evidence="1">
    <location>
        <position position="76"/>
    </location>
    <ligand>
        <name>Mn(2+)</name>
        <dbReference type="ChEBI" id="CHEBI:29035"/>
        <label>2</label>
    </ligand>
</feature>
<feature type="binding site" evidence="1">
    <location>
        <position position="98"/>
    </location>
    <ligand>
        <name>Mn(2+)</name>
        <dbReference type="ChEBI" id="CHEBI:29035"/>
        <label>2</label>
    </ligand>
</feature>
<feature type="binding site" evidence="1">
    <location>
        <position position="150"/>
    </location>
    <ligand>
        <name>Mn(2+)</name>
        <dbReference type="ChEBI" id="CHEBI:29035"/>
        <label>2</label>
    </ligand>
</feature>
<gene>
    <name evidence="1" type="primary">ppaC</name>
    <name type="ordered locus">stu0372</name>
</gene>
<dbReference type="EC" id="3.6.1.1" evidence="1"/>
<dbReference type="EMBL" id="CP000023">
    <property type="protein sequence ID" value="AAV60091.1"/>
    <property type="molecule type" value="Genomic_DNA"/>
</dbReference>
<dbReference type="RefSeq" id="WP_011225519.1">
    <property type="nucleotide sequence ID" value="NC_006448.1"/>
</dbReference>
<dbReference type="SMR" id="Q5M5T1"/>
<dbReference type="STRING" id="264199.stu0372"/>
<dbReference type="KEGG" id="stl:stu0372"/>
<dbReference type="eggNOG" id="COG1227">
    <property type="taxonomic scope" value="Bacteria"/>
</dbReference>
<dbReference type="HOGENOM" id="CLU_025243_0_1_9"/>
<dbReference type="Proteomes" id="UP000001170">
    <property type="component" value="Chromosome"/>
</dbReference>
<dbReference type="GO" id="GO:0005737">
    <property type="term" value="C:cytoplasm"/>
    <property type="evidence" value="ECO:0007669"/>
    <property type="project" value="UniProtKB-SubCell"/>
</dbReference>
<dbReference type="GO" id="GO:0004427">
    <property type="term" value="F:inorganic diphosphate phosphatase activity"/>
    <property type="evidence" value="ECO:0007669"/>
    <property type="project" value="UniProtKB-UniRule"/>
</dbReference>
<dbReference type="GO" id="GO:0030145">
    <property type="term" value="F:manganese ion binding"/>
    <property type="evidence" value="ECO:0007669"/>
    <property type="project" value="UniProtKB-UniRule"/>
</dbReference>
<dbReference type="FunFam" id="3.10.310.20:FF:000001">
    <property type="entry name" value="Probable manganese-dependent inorganic pyrophosphatase"/>
    <property type="match status" value="1"/>
</dbReference>
<dbReference type="FunFam" id="3.90.1640.10:FF:000001">
    <property type="entry name" value="Probable manganese-dependent inorganic pyrophosphatase"/>
    <property type="match status" value="1"/>
</dbReference>
<dbReference type="Gene3D" id="3.10.310.20">
    <property type="entry name" value="DHHA2 domain"/>
    <property type="match status" value="1"/>
</dbReference>
<dbReference type="Gene3D" id="3.90.1640.10">
    <property type="entry name" value="inorganic pyrophosphatase (n-terminal core)"/>
    <property type="match status" value="1"/>
</dbReference>
<dbReference type="HAMAP" id="MF_00207">
    <property type="entry name" value="PPase_C"/>
    <property type="match status" value="1"/>
</dbReference>
<dbReference type="InterPro" id="IPR001667">
    <property type="entry name" value="DDH_dom"/>
</dbReference>
<dbReference type="InterPro" id="IPR038763">
    <property type="entry name" value="DHH_sf"/>
</dbReference>
<dbReference type="InterPro" id="IPR004097">
    <property type="entry name" value="DHHA2"/>
</dbReference>
<dbReference type="InterPro" id="IPR038222">
    <property type="entry name" value="DHHA2_dom_sf"/>
</dbReference>
<dbReference type="InterPro" id="IPR022934">
    <property type="entry name" value="Mn-dep_inorganic_PyrPase"/>
</dbReference>
<dbReference type="InterPro" id="IPR051319">
    <property type="entry name" value="Oligoribo/pAp-PDE_c-di-AMP_PDE"/>
</dbReference>
<dbReference type="NCBIfam" id="NF003877">
    <property type="entry name" value="PRK05427.1"/>
    <property type="match status" value="1"/>
</dbReference>
<dbReference type="PANTHER" id="PTHR47618">
    <property type="entry name" value="BIFUNCTIONAL OLIGORIBONUCLEASE AND PAP PHOSPHATASE NRNA"/>
    <property type="match status" value="1"/>
</dbReference>
<dbReference type="PANTHER" id="PTHR47618:SF1">
    <property type="entry name" value="BIFUNCTIONAL OLIGORIBONUCLEASE AND PAP PHOSPHATASE NRNA"/>
    <property type="match status" value="1"/>
</dbReference>
<dbReference type="Pfam" id="PF01368">
    <property type="entry name" value="DHH"/>
    <property type="match status" value="1"/>
</dbReference>
<dbReference type="Pfam" id="PF02833">
    <property type="entry name" value="DHHA2"/>
    <property type="match status" value="1"/>
</dbReference>
<dbReference type="SMART" id="SM01131">
    <property type="entry name" value="DHHA2"/>
    <property type="match status" value="1"/>
</dbReference>
<dbReference type="SUPFAM" id="SSF64182">
    <property type="entry name" value="DHH phosphoesterases"/>
    <property type="match status" value="1"/>
</dbReference>
<protein>
    <recommendedName>
        <fullName evidence="1">Probable manganese-dependent inorganic pyrophosphatase</fullName>
        <ecNumber evidence="1">3.6.1.1</ecNumber>
    </recommendedName>
    <alternativeName>
        <fullName evidence="1">Pyrophosphate phospho-hydrolase</fullName>
        <shortName evidence="1">PPase</shortName>
    </alternativeName>
</protein>
<evidence type="ECO:0000255" key="1">
    <source>
        <dbReference type="HAMAP-Rule" id="MF_00207"/>
    </source>
</evidence>
<comment type="catalytic activity">
    <reaction evidence="1">
        <text>diphosphate + H2O = 2 phosphate + H(+)</text>
        <dbReference type="Rhea" id="RHEA:24576"/>
        <dbReference type="ChEBI" id="CHEBI:15377"/>
        <dbReference type="ChEBI" id="CHEBI:15378"/>
        <dbReference type="ChEBI" id="CHEBI:33019"/>
        <dbReference type="ChEBI" id="CHEBI:43474"/>
        <dbReference type="EC" id="3.6.1.1"/>
    </reaction>
</comment>
<comment type="cofactor">
    <cofactor evidence="1">
        <name>Mn(2+)</name>
        <dbReference type="ChEBI" id="CHEBI:29035"/>
    </cofactor>
    <text evidence="1">Binds 2 manganese ions per subunit.</text>
</comment>
<comment type="subcellular location">
    <subcellularLocation>
        <location evidence="1">Cytoplasm</location>
    </subcellularLocation>
</comment>
<comment type="similarity">
    <text evidence="1">Belongs to the PPase class C family.</text>
</comment>
<name>PPAC_STRT2</name>
<organism>
    <name type="scientific">Streptococcus thermophilus (strain ATCC BAA-250 / LMG 18311)</name>
    <dbReference type="NCBI Taxonomy" id="264199"/>
    <lineage>
        <taxon>Bacteria</taxon>
        <taxon>Bacillati</taxon>
        <taxon>Bacillota</taxon>
        <taxon>Bacilli</taxon>
        <taxon>Lactobacillales</taxon>
        <taxon>Streptococcaceae</taxon>
        <taxon>Streptococcus</taxon>
    </lineage>
</organism>